<comment type="function">
    <text evidence="1">Synthesizes alpha-1,4-glucan chains using ADP-glucose.</text>
</comment>
<comment type="catalytic activity">
    <reaction evidence="1">
        <text>[(1-&gt;4)-alpha-D-glucosyl](n) + ADP-alpha-D-glucose = [(1-&gt;4)-alpha-D-glucosyl](n+1) + ADP + H(+)</text>
        <dbReference type="Rhea" id="RHEA:18189"/>
        <dbReference type="Rhea" id="RHEA-COMP:9584"/>
        <dbReference type="Rhea" id="RHEA-COMP:9587"/>
        <dbReference type="ChEBI" id="CHEBI:15378"/>
        <dbReference type="ChEBI" id="CHEBI:15444"/>
        <dbReference type="ChEBI" id="CHEBI:57498"/>
        <dbReference type="ChEBI" id="CHEBI:456216"/>
        <dbReference type="EC" id="2.4.1.21"/>
    </reaction>
</comment>
<comment type="pathway">
    <text evidence="1">Glycan biosynthesis; glycogen biosynthesis.</text>
</comment>
<comment type="similarity">
    <text evidence="1">Belongs to the glycosyltransferase 1 family. Bacterial/plant glycogen synthase subfamily.</text>
</comment>
<name>GLGA_THEMA</name>
<keyword id="KW-0320">Glycogen biosynthesis</keyword>
<keyword id="KW-0328">Glycosyltransferase</keyword>
<keyword id="KW-1185">Reference proteome</keyword>
<keyword id="KW-0808">Transferase</keyword>
<feature type="chain" id="PRO_0000188658" description="Glycogen synthase">
    <location>
        <begin position="1"/>
        <end position="486"/>
    </location>
</feature>
<feature type="binding site" evidence="1">
    <location>
        <position position="15"/>
    </location>
    <ligand>
        <name>ADP-alpha-D-glucose</name>
        <dbReference type="ChEBI" id="CHEBI:57498"/>
    </ligand>
</feature>
<reference key="1">
    <citation type="journal article" date="1999" name="Nature">
        <title>Evidence for lateral gene transfer between Archaea and Bacteria from genome sequence of Thermotoga maritima.</title>
        <authorList>
            <person name="Nelson K.E."/>
            <person name="Clayton R.A."/>
            <person name="Gill S.R."/>
            <person name="Gwinn M.L."/>
            <person name="Dodson R.J."/>
            <person name="Haft D.H."/>
            <person name="Hickey E.K."/>
            <person name="Peterson J.D."/>
            <person name="Nelson W.C."/>
            <person name="Ketchum K.A."/>
            <person name="McDonald L.A."/>
            <person name="Utterback T.R."/>
            <person name="Malek J.A."/>
            <person name="Linher K.D."/>
            <person name="Garrett M.M."/>
            <person name="Stewart A.M."/>
            <person name="Cotton M.D."/>
            <person name="Pratt M.S."/>
            <person name="Phillips C.A."/>
            <person name="Richardson D.L."/>
            <person name="Heidelberg J.F."/>
            <person name="Sutton G.G."/>
            <person name="Fleischmann R.D."/>
            <person name="Eisen J.A."/>
            <person name="White O."/>
            <person name="Salzberg S.L."/>
            <person name="Smith H.O."/>
            <person name="Venter J.C."/>
            <person name="Fraser C.M."/>
        </authorList>
    </citation>
    <scope>NUCLEOTIDE SEQUENCE [LARGE SCALE GENOMIC DNA]</scope>
    <source>
        <strain>ATCC 43589 / DSM 3109 / JCM 10099 / NBRC 100826 / MSB8</strain>
    </source>
</reference>
<organism>
    <name type="scientific">Thermotoga maritima (strain ATCC 43589 / DSM 3109 / JCM 10099 / NBRC 100826 / MSB8)</name>
    <dbReference type="NCBI Taxonomy" id="243274"/>
    <lineage>
        <taxon>Bacteria</taxon>
        <taxon>Thermotogati</taxon>
        <taxon>Thermotogota</taxon>
        <taxon>Thermotogae</taxon>
        <taxon>Thermotogales</taxon>
        <taxon>Thermotogaceae</taxon>
        <taxon>Thermotoga</taxon>
    </lineage>
</organism>
<gene>
    <name evidence="1" type="primary">glgA</name>
    <name type="ordered locus">TM_0895</name>
</gene>
<accession>Q9WZZ7</accession>
<evidence type="ECO:0000255" key="1">
    <source>
        <dbReference type="HAMAP-Rule" id="MF_00484"/>
    </source>
</evidence>
<protein>
    <recommendedName>
        <fullName evidence="1">Glycogen synthase</fullName>
        <ecNumber evidence="1">2.4.1.21</ecNumber>
    </recommendedName>
    <alternativeName>
        <fullName evidence="1">Starch [bacterial glycogen] synthase</fullName>
    </alternativeName>
</protein>
<dbReference type="EC" id="2.4.1.21" evidence="1"/>
<dbReference type="EMBL" id="AE000512">
    <property type="protein sequence ID" value="AAD35976.1"/>
    <property type="molecule type" value="Genomic_DNA"/>
</dbReference>
<dbReference type="PIR" id="H72321">
    <property type="entry name" value="H72321"/>
</dbReference>
<dbReference type="RefSeq" id="NP_228703.1">
    <property type="nucleotide sequence ID" value="NC_000853.1"/>
</dbReference>
<dbReference type="RefSeq" id="WP_004080686.1">
    <property type="nucleotide sequence ID" value="NZ_CP011107.1"/>
</dbReference>
<dbReference type="SMR" id="Q9WZZ7"/>
<dbReference type="FunCoup" id="Q9WZZ7">
    <property type="interactions" value="72"/>
</dbReference>
<dbReference type="STRING" id="243274.TM_0895"/>
<dbReference type="CAZy" id="GT5">
    <property type="family name" value="Glycosyltransferase Family 5"/>
</dbReference>
<dbReference type="PaxDb" id="243274-THEMA_00160"/>
<dbReference type="EnsemblBacteria" id="AAD35976">
    <property type="protein sequence ID" value="AAD35976"/>
    <property type="gene ID" value="TM_0895"/>
</dbReference>
<dbReference type="KEGG" id="tma:TM0895"/>
<dbReference type="KEGG" id="tmi:THEMA_00160"/>
<dbReference type="KEGG" id="tmm:Tmari_0897"/>
<dbReference type="KEGG" id="tmw:THMA_0917"/>
<dbReference type="eggNOG" id="COG0297">
    <property type="taxonomic scope" value="Bacteria"/>
</dbReference>
<dbReference type="InParanoid" id="Q9WZZ7"/>
<dbReference type="OrthoDB" id="9808590at2"/>
<dbReference type="UniPathway" id="UPA00164"/>
<dbReference type="Proteomes" id="UP000008183">
    <property type="component" value="Chromosome"/>
</dbReference>
<dbReference type="GO" id="GO:0009011">
    <property type="term" value="F:alpha-1,4-glucan glucosyltransferase (ADP-glucose donor) activity"/>
    <property type="evidence" value="ECO:0007669"/>
    <property type="project" value="UniProtKB-UniRule"/>
</dbReference>
<dbReference type="GO" id="GO:0004373">
    <property type="term" value="F:alpha-1,4-glucan glucosyltransferase (UDP-glucose donor) activity"/>
    <property type="evidence" value="ECO:0007669"/>
    <property type="project" value="InterPro"/>
</dbReference>
<dbReference type="GO" id="GO:0005978">
    <property type="term" value="P:glycogen biosynthetic process"/>
    <property type="evidence" value="ECO:0007669"/>
    <property type="project" value="UniProtKB-UniRule"/>
</dbReference>
<dbReference type="CDD" id="cd03791">
    <property type="entry name" value="GT5_Glycogen_synthase_DULL1-like"/>
    <property type="match status" value="1"/>
</dbReference>
<dbReference type="Gene3D" id="3.40.50.2000">
    <property type="entry name" value="Glycogen Phosphorylase B"/>
    <property type="match status" value="2"/>
</dbReference>
<dbReference type="HAMAP" id="MF_00484">
    <property type="entry name" value="Glycogen_synth"/>
    <property type="match status" value="1"/>
</dbReference>
<dbReference type="InterPro" id="IPR001296">
    <property type="entry name" value="Glyco_trans_1"/>
</dbReference>
<dbReference type="InterPro" id="IPR011835">
    <property type="entry name" value="GS/SS"/>
</dbReference>
<dbReference type="InterPro" id="IPR013534">
    <property type="entry name" value="Starch_synth_cat_dom"/>
</dbReference>
<dbReference type="NCBIfam" id="TIGR02095">
    <property type="entry name" value="glgA"/>
    <property type="match status" value="1"/>
</dbReference>
<dbReference type="PANTHER" id="PTHR45825:SF11">
    <property type="entry name" value="ALPHA AMYLASE DOMAIN-CONTAINING PROTEIN"/>
    <property type="match status" value="1"/>
</dbReference>
<dbReference type="PANTHER" id="PTHR45825">
    <property type="entry name" value="GRANULE-BOUND STARCH SYNTHASE 1, CHLOROPLASTIC/AMYLOPLASTIC"/>
    <property type="match status" value="1"/>
</dbReference>
<dbReference type="Pfam" id="PF08323">
    <property type="entry name" value="Glyco_transf_5"/>
    <property type="match status" value="1"/>
</dbReference>
<dbReference type="Pfam" id="PF00534">
    <property type="entry name" value="Glycos_transf_1"/>
    <property type="match status" value="1"/>
</dbReference>
<dbReference type="SUPFAM" id="SSF53756">
    <property type="entry name" value="UDP-Glycosyltransferase/glycogen phosphorylase"/>
    <property type="match status" value="1"/>
</dbReference>
<sequence>MKVVFVSYEVFPFAKVGGLADVAGTLPKYLKKHGVDVTIVMPKHRIVEKNAEKFGYEIKKVAESLSVSHVKTDQKFDIYESVLPGSDVKTYFVANDYYFSAEDVYAGPDLGEQAIFFCAATLDLVKHLDLKPDIVHVNDWQTALIPVYLKTVYRDDPYFSRTATVLTIHNLGYQGVFDPKYLSFAGLPDYVYTIDGLEFYGQLNFLKGGIVFSDVINTVSPTYAEEIQTEEYGEKLDGVLRMRSKDLYGILNGIDYELYNPATDRYIYVNYDVNRLELKWENKVKLQEELGLPVNKETAVAGLISRLVPQKGLDLLVDVMDYLTLFDLQIVVLGTGDEQYENAFRKFQERYPDKVSANIKFDVELAQKIYAGADIFLMPSRYEPCGLGQMFSMRYGTIPVVRYTGGLADTVKEYDPQSMEGTGFGFKKYDSAHLLKAVSKALHFYYREKDHWRRIMTNAMNTDLSWDRSAKEYVDLYKKALAKVGR</sequence>
<proteinExistence type="inferred from homology"/>